<evidence type="ECO:0000250" key="1">
    <source>
        <dbReference type="UniProtKB" id="O03042"/>
    </source>
</evidence>
<evidence type="ECO:0000255" key="2">
    <source>
        <dbReference type="HAMAP-Rule" id="MF_01338"/>
    </source>
</evidence>
<keyword id="KW-0113">Calvin cycle</keyword>
<keyword id="KW-0120">Carbon dioxide fixation</keyword>
<keyword id="KW-0150">Chloroplast</keyword>
<keyword id="KW-1015">Disulfide bond</keyword>
<keyword id="KW-0456">Lyase</keyword>
<keyword id="KW-0460">Magnesium</keyword>
<keyword id="KW-0479">Metal-binding</keyword>
<keyword id="KW-0503">Monooxygenase</keyword>
<keyword id="KW-0560">Oxidoreductase</keyword>
<keyword id="KW-0597">Phosphoprotein</keyword>
<keyword id="KW-0601">Photorespiration</keyword>
<keyword id="KW-0602">Photosynthesis</keyword>
<keyword id="KW-0934">Plastid</keyword>
<feature type="propeptide" id="PRO_0000299995" evidence="2">
    <location>
        <begin position="1"/>
        <end position="2"/>
    </location>
</feature>
<feature type="chain" id="PRO_0000299996" description="Ribulose bisphosphate carboxylase large chain">
    <location>
        <begin position="3"/>
        <end position="479"/>
    </location>
</feature>
<feature type="active site" description="Proton acceptor" evidence="2">
    <location>
        <position position="175"/>
    </location>
</feature>
<feature type="active site" description="Proton acceptor" evidence="2">
    <location>
        <position position="294"/>
    </location>
</feature>
<feature type="binding site" description="in homodimeric partner" evidence="2">
    <location>
        <position position="123"/>
    </location>
    <ligand>
        <name>substrate</name>
    </ligand>
</feature>
<feature type="binding site" evidence="2">
    <location>
        <position position="173"/>
    </location>
    <ligand>
        <name>substrate</name>
    </ligand>
</feature>
<feature type="binding site" evidence="2">
    <location>
        <position position="177"/>
    </location>
    <ligand>
        <name>substrate</name>
    </ligand>
</feature>
<feature type="binding site" description="via carbamate group" evidence="2">
    <location>
        <position position="201"/>
    </location>
    <ligand>
        <name>Mg(2+)</name>
        <dbReference type="ChEBI" id="CHEBI:18420"/>
    </ligand>
</feature>
<feature type="binding site" evidence="2">
    <location>
        <position position="203"/>
    </location>
    <ligand>
        <name>Mg(2+)</name>
        <dbReference type="ChEBI" id="CHEBI:18420"/>
    </ligand>
</feature>
<feature type="binding site" evidence="2">
    <location>
        <position position="204"/>
    </location>
    <ligand>
        <name>Mg(2+)</name>
        <dbReference type="ChEBI" id="CHEBI:18420"/>
    </ligand>
</feature>
<feature type="binding site" evidence="2">
    <location>
        <position position="295"/>
    </location>
    <ligand>
        <name>substrate</name>
    </ligand>
</feature>
<feature type="binding site" evidence="2">
    <location>
        <position position="327"/>
    </location>
    <ligand>
        <name>substrate</name>
    </ligand>
</feature>
<feature type="binding site" evidence="2">
    <location>
        <position position="379"/>
    </location>
    <ligand>
        <name>substrate</name>
    </ligand>
</feature>
<feature type="site" description="Transition state stabilizer" evidence="2">
    <location>
        <position position="334"/>
    </location>
</feature>
<feature type="modified residue" description="N6-carboxylysine" evidence="2">
    <location>
        <position position="201"/>
    </location>
</feature>
<feature type="modified residue" description="Phosphoserine" evidence="1">
    <location>
        <position position="208"/>
    </location>
</feature>
<feature type="modified residue" description="Phosphothreonine" evidence="1">
    <location>
        <position position="330"/>
    </location>
</feature>
<feature type="disulfide bond" description="Interchain; in linked form" evidence="2">
    <location>
        <position position="247"/>
    </location>
</feature>
<organism>
    <name type="scientific">Draba nemorosa</name>
    <name type="common">Woodland whitlowgrass</name>
    <dbReference type="NCBI Taxonomy" id="171822"/>
    <lineage>
        <taxon>Eukaryota</taxon>
        <taxon>Viridiplantae</taxon>
        <taxon>Streptophyta</taxon>
        <taxon>Embryophyta</taxon>
        <taxon>Tracheophyta</taxon>
        <taxon>Spermatophyta</taxon>
        <taxon>Magnoliopsida</taxon>
        <taxon>eudicotyledons</taxon>
        <taxon>Gunneridae</taxon>
        <taxon>Pentapetalae</taxon>
        <taxon>rosids</taxon>
        <taxon>malvids</taxon>
        <taxon>Brassicales</taxon>
        <taxon>Brassicaceae</taxon>
        <taxon>Arabideae</taxon>
        <taxon>Draba</taxon>
    </lineage>
</organism>
<protein>
    <recommendedName>
        <fullName evidence="2">Ribulose bisphosphate carboxylase large chain</fullName>
        <shortName evidence="2">RuBisCO large subunit</shortName>
        <ecNumber evidence="2">4.1.1.39</ecNumber>
    </recommendedName>
</protein>
<proteinExistence type="inferred from homology"/>
<comment type="function">
    <text evidence="2">RuBisCO catalyzes two reactions: the carboxylation of D-ribulose 1,5-bisphosphate, the primary event in carbon dioxide fixation, as well as the oxidative fragmentation of the pentose substrate in the photorespiration process. Both reactions occur simultaneously and in competition at the same active site.</text>
</comment>
<comment type="catalytic activity">
    <reaction evidence="2">
        <text>2 (2R)-3-phosphoglycerate + 2 H(+) = D-ribulose 1,5-bisphosphate + CO2 + H2O</text>
        <dbReference type="Rhea" id="RHEA:23124"/>
        <dbReference type="ChEBI" id="CHEBI:15377"/>
        <dbReference type="ChEBI" id="CHEBI:15378"/>
        <dbReference type="ChEBI" id="CHEBI:16526"/>
        <dbReference type="ChEBI" id="CHEBI:57870"/>
        <dbReference type="ChEBI" id="CHEBI:58272"/>
        <dbReference type="EC" id="4.1.1.39"/>
    </reaction>
</comment>
<comment type="catalytic activity">
    <reaction evidence="2">
        <text>D-ribulose 1,5-bisphosphate + O2 = 2-phosphoglycolate + (2R)-3-phosphoglycerate + 2 H(+)</text>
        <dbReference type="Rhea" id="RHEA:36631"/>
        <dbReference type="ChEBI" id="CHEBI:15378"/>
        <dbReference type="ChEBI" id="CHEBI:15379"/>
        <dbReference type="ChEBI" id="CHEBI:57870"/>
        <dbReference type="ChEBI" id="CHEBI:58033"/>
        <dbReference type="ChEBI" id="CHEBI:58272"/>
    </reaction>
</comment>
<comment type="cofactor">
    <cofactor evidence="2">
        <name>Mg(2+)</name>
        <dbReference type="ChEBI" id="CHEBI:18420"/>
    </cofactor>
    <text evidence="2">Binds 1 Mg(2+) ion per subunit.</text>
</comment>
<comment type="subunit">
    <text evidence="2">Heterohexadecamer of 8 large chains and 8 small chains; disulfide-linked. The disulfide link is formed within the large subunit homodimers.</text>
</comment>
<comment type="subcellular location">
    <subcellularLocation>
        <location>Plastid</location>
        <location>Chloroplast</location>
    </subcellularLocation>
</comment>
<comment type="PTM">
    <text evidence="2">The disulfide bond which can form in the large chain dimeric partners within the hexadecamer appears to be associated with oxidative stress and protein turnover.</text>
</comment>
<comment type="miscellaneous">
    <text evidence="2">The basic functional RuBisCO is composed of a large chain homodimer in a 'head-to-tail' conformation. In form I RuBisCO this homodimer is arranged in a barrel-like tetramer with the small subunits forming a tetrameric 'cap' on each end of the 'barrel'.</text>
</comment>
<comment type="similarity">
    <text evidence="2">Belongs to the RuBisCO large chain family. Type I subfamily.</text>
</comment>
<name>RBL_DRANE</name>
<accession>A4QL27</accession>
<gene>
    <name evidence="2" type="primary">rbcL</name>
</gene>
<sequence length="479" mass="52952">MSPQTETKASVGFKAGVKEYKLTYYTPEYETKDTDILAAFRVTPQPGVPPEEAGAAVAAESSTGTWTTVWTDGLTSLDRYKGRCYHIEPVPGEETQFIAYVAYPLDLFEEGSVTNMFTSIVGNVFGFKALAALRLEDLRIPPAYTKTFQGPPHGIQVERDKLNKYGRPLLGCTIKPKLGLSAKNYGRAVYECLRGGLDFTKDDENVNSQPFMRWRDRFLFCAEAIYKSQAETGEIKGHYLNATAGTCEEMIKRAVFARELGVPIVMHDYLTGGFTANTSLSHYCRDNGLLLHIHRAMHAVIDRQKNHGMHFRVLAKALRLSGGDHIHAGTVVGKLEGDRESTLGFVDLLRDDYVEKDRSRGIFFTQDWVSLPGVLPVASGGIHVWHMPALTEIFGDDSVLQFGGGTLGHPWGNAPGAVANRVALEACVQARNEGRDLAVEGNEIIREACKWSPELAAACEVWKEIRFNFPTIDKLDGQA</sequence>
<reference key="1">
    <citation type="submission" date="2007-03" db="EMBL/GenBank/DDBJ databases">
        <title>Sequencing analysis of Draba nemoroza chloroplast DNA.</title>
        <authorList>
            <person name="Hosouchi T."/>
            <person name="Tsuruoka H."/>
            <person name="Kotani H."/>
        </authorList>
    </citation>
    <scope>NUCLEOTIDE SEQUENCE [LARGE SCALE GENOMIC DNA]</scope>
</reference>
<geneLocation type="chloroplast"/>
<dbReference type="EC" id="4.1.1.39" evidence="2"/>
<dbReference type="EMBL" id="AP009373">
    <property type="protein sequence ID" value="BAF50382.1"/>
    <property type="molecule type" value="Genomic_DNA"/>
</dbReference>
<dbReference type="RefSeq" id="YP_001123558.1">
    <property type="nucleotide sequence ID" value="NC_009272.1"/>
</dbReference>
<dbReference type="SMR" id="A4QL27"/>
<dbReference type="GeneID" id="4964776"/>
<dbReference type="GO" id="GO:0009507">
    <property type="term" value="C:chloroplast"/>
    <property type="evidence" value="ECO:0007669"/>
    <property type="project" value="UniProtKB-SubCell"/>
</dbReference>
<dbReference type="GO" id="GO:0000287">
    <property type="term" value="F:magnesium ion binding"/>
    <property type="evidence" value="ECO:0007669"/>
    <property type="project" value="UniProtKB-UniRule"/>
</dbReference>
<dbReference type="GO" id="GO:0004497">
    <property type="term" value="F:monooxygenase activity"/>
    <property type="evidence" value="ECO:0007669"/>
    <property type="project" value="UniProtKB-KW"/>
</dbReference>
<dbReference type="GO" id="GO:0016984">
    <property type="term" value="F:ribulose-bisphosphate carboxylase activity"/>
    <property type="evidence" value="ECO:0007669"/>
    <property type="project" value="UniProtKB-UniRule"/>
</dbReference>
<dbReference type="GO" id="GO:0009853">
    <property type="term" value="P:photorespiration"/>
    <property type="evidence" value="ECO:0007669"/>
    <property type="project" value="UniProtKB-KW"/>
</dbReference>
<dbReference type="GO" id="GO:0019253">
    <property type="term" value="P:reductive pentose-phosphate cycle"/>
    <property type="evidence" value="ECO:0007669"/>
    <property type="project" value="UniProtKB-UniRule"/>
</dbReference>
<dbReference type="CDD" id="cd08212">
    <property type="entry name" value="RuBisCO_large_I"/>
    <property type="match status" value="1"/>
</dbReference>
<dbReference type="FunFam" id="3.20.20.110:FF:000001">
    <property type="entry name" value="Ribulose bisphosphate carboxylase large chain"/>
    <property type="match status" value="1"/>
</dbReference>
<dbReference type="FunFam" id="3.30.70.150:FF:000001">
    <property type="entry name" value="Ribulose bisphosphate carboxylase large chain"/>
    <property type="match status" value="1"/>
</dbReference>
<dbReference type="Gene3D" id="3.20.20.110">
    <property type="entry name" value="Ribulose bisphosphate carboxylase, large subunit, C-terminal domain"/>
    <property type="match status" value="1"/>
</dbReference>
<dbReference type="Gene3D" id="3.30.70.150">
    <property type="entry name" value="RuBisCO large subunit, N-terminal domain"/>
    <property type="match status" value="1"/>
</dbReference>
<dbReference type="HAMAP" id="MF_01338">
    <property type="entry name" value="RuBisCO_L_type1"/>
    <property type="match status" value="1"/>
</dbReference>
<dbReference type="InterPro" id="IPR033966">
    <property type="entry name" value="RuBisCO"/>
</dbReference>
<dbReference type="InterPro" id="IPR020878">
    <property type="entry name" value="RuBisCo_large_chain_AS"/>
</dbReference>
<dbReference type="InterPro" id="IPR000685">
    <property type="entry name" value="RuBisCO_lsu_C"/>
</dbReference>
<dbReference type="InterPro" id="IPR036376">
    <property type="entry name" value="RuBisCO_lsu_C_sf"/>
</dbReference>
<dbReference type="InterPro" id="IPR017443">
    <property type="entry name" value="RuBisCO_lsu_fd_N"/>
</dbReference>
<dbReference type="InterPro" id="IPR036422">
    <property type="entry name" value="RuBisCO_lsu_N_sf"/>
</dbReference>
<dbReference type="InterPro" id="IPR020888">
    <property type="entry name" value="RuBisCO_lsuI"/>
</dbReference>
<dbReference type="NCBIfam" id="NF003252">
    <property type="entry name" value="PRK04208.1"/>
    <property type="match status" value="1"/>
</dbReference>
<dbReference type="PANTHER" id="PTHR42704">
    <property type="entry name" value="RIBULOSE BISPHOSPHATE CARBOXYLASE"/>
    <property type="match status" value="1"/>
</dbReference>
<dbReference type="PANTHER" id="PTHR42704:SF16">
    <property type="entry name" value="RIBULOSE BISPHOSPHATE CARBOXYLASE LARGE CHAIN"/>
    <property type="match status" value="1"/>
</dbReference>
<dbReference type="Pfam" id="PF00016">
    <property type="entry name" value="RuBisCO_large"/>
    <property type="match status" value="1"/>
</dbReference>
<dbReference type="Pfam" id="PF02788">
    <property type="entry name" value="RuBisCO_large_N"/>
    <property type="match status" value="1"/>
</dbReference>
<dbReference type="SFLD" id="SFLDG01052">
    <property type="entry name" value="RuBisCO"/>
    <property type="match status" value="1"/>
</dbReference>
<dbReference type="SFLD" id="SFLDS00014">
    <property type="entry name" value="RuBisCO"/>
    <property type="match status" value="1"/>
</dbReference>
<dbReference type="SFLD" id="SFLDG00301">
    <property type="entry name" value="RuBisCO-like_proteins"/>
    <property type="match status" value="1"/>
</dbReference>
<dbReference type="SUPFAM" id="SSF51649">
    <property type="entry name" value="RuBisCo, C-terminal domain"/>
    <property type="match status" value="1"/>
</dbReference>
<dbReference type="SUPFAM" id="SSF54966">
    <property type="entry name" value="RuBisCO, large subunit, small (N-terminal) domain"/>
    <property type="match status" value="1"/>
</dbReference>
<dbReference type="PROSITE" id="PS00157">
    <property type="entry name" value="RUBISCO_LARGE"/>
    <property type="match status" value="1"/>
</dbReference>